<keyword id="KW-0025">Alternative splicing</keyword>
<keyword id="KW-0653">Protein transport</keyword>
<keyword id="KW-1267">Proteomics identification</keyword>
<keyword id="KW-1185">Reference proteome</keyword>
<keyword id="KW-0813">Transport</keyword>
<protein>
    <recommendedName>
        <fullName>Sorting nexin-31</fullName>
    </recommendedName>
</protein>
<evidence type="ECO:0000255" key="1">
    <source>
        <dbReference type="PROSITE-ProRule" id="PRU00147"/>
    </source>
</evidence>
<evidence type="ECO:0000269" key="2">
    <source>
    </source>
</evidence>
<evidence type="ECO:0000269" key="3">
    <source>
    </source>
</evidence>
<evidence type="ECO:0000269" key="4">
    <source>
    </source>
</evidence>
<evidence type="ECO:0000303" key="5">
    <source>
    </source>
</evidence>
<evidence type="ECO:0000305" key="6"/>
<evidence type="ECO:0000305" key="7">
    <source>
    </source>
</evidence>
<gene>
    <name type="primary">SNX31</name>
</gene>
<accession>Q8N9S9</accession>
<accession>C9J6L9</accession>
<accession>Q8N0U9</accession>
<name>SNX31_HUMAN</name>
<reference key="1">
    <citation type="journal article" date="2004" name="Nat. Genet.">
        <title>Complete sequencing and characterization of 21,243 full-length human cDNAs.</title>
        <authorList>
            <person name="Ota T."/>
            <person name="Suzuki Y."/>
            <person name="Nishikawa T."/>
            <person name="Otsuki T."/>
            <person name="Sugiyama T."/>
            <person name="Irie R."/>
            <person name="Wakamatsu A."/>
            <person name="Hayashi K."/>
            <person name="Sato H."/>
            <person name="Nagai K."/>
            <person name="Kimura K."/>
            <person name="Makita H."/>
            <person name="Sekine M."/>
            <person name="Obayashi M."/>
            <person name="Nishi T."/>
            <person name="Shibahara T."/>
            <person name="Tanaka T."/>
            <person name="Ishii S."/>
            <person name="Yamamoto J."/>
            <person name="Saito K."/>
            <person name="Kawai Y."/>
            <person name="Isono Y."/>
            <person name="Nakamura Y."/>
            <person name="Nagahari K."/>
            <person name="Murakami K."/>
            <person name="Yasuda T."/>
            <person name="Iwayanagi T."/>
            <person name="Wagatsuma M."/>
            <person name="Shiratori A."/>
            <person name="Sudo H."/>
            <person name="Hosoiri T."/>
            <person name="Kaku Y."/>
            <person name="Kodaira H."/>
            <person name="Kondo H."/>
            <person name="Sugawara M."/>
            <person name="Takahashi M."/>
            <person name="Kanda K."/>
            <person name="Yokoi T."/>
            <person name="Furuya T."/>
            <person name="Kikkawa E."/>
            <person name="Omura Y."/>
            <person name="Abe K."/>
            <person name="Kamihara K."/>
            <person name="Katsuta N."/>
            <person name="Sato K."/>
            <person name="Tanikawa M."/>
            <person name="Yamazaki M."/>
            <person name="Ninomiya K."/>
            <person name="Ishibashi T."/>
            <person name="Yamashita H."/>
            <person name="Murakawa K."/>
            <person name="Fujimori K."/>
            <person name="Tanai H."/>
            <person name="Kimata M."/>
            <person name="Watanabe M."/>
            <person name="Hiraoka S."/>
            <person name="Chiba Y."/>
            <person name="Ishida S."/>
            <person name="Ono Y."/>
            <person name="Takiguchi S."/>
            <person name="Watanabe S."/>
            <person name="Yosida M."/>
            <person name="Hotuta T."/>
            <person name="Kusano J."/>
            <person name="Kanehori K."/>
            <person name="Takahashi-Fujii A."/>
            <person name="Hara H."/>
            <person name="Tanase T.-O."/>
            <person name="Nomura Y."/>
            <person name="Togiya S."/>
            <person name="Komai F."/>
            <person name="Hara R."/>
            <person name="Takeuchi K."/>
            <person name="Arita M."/>
            <person name="Imose N."/>
            <person name="Musashino K."/>
            <person name="Yuuki H."/>
            <person name="Oshima A."/>
            <person name="Sasaki N."/>
            <person name="Aotsuka S."/>
            <person name="Yoshikawa Y."/>
            <person name="Matsunawa H."/>
            <person name="Ichihara T."/>
            <person name="Shiohata N."/>
            <person name="Sano S."/>
            <person name="Moriya S."/>
            <person name="Momiyama H."/>
            <person name="Satoh N."/>
            <person name="Takami S."/>
            <person name="Terashima Y."/>
            <person name="Suzuki O."/>
            <person name="Nakagawa S."/>
            <person name="Senoh A."/>
            <person name="Mizoguchi H."/>
            <person name="Goto Y."/>
            <person name="Shimizu F."/>
            <person name="Wakebe H."/>
            <person name="Hishigaki H."/>
            <person name="Watanabe T."/>
            <person name="Sugiyama A."/>
            <person name="Takemoto M."/>
            <person name="Kawakami B."/>
            <person name="Yamazaki M."/>
            <person name="Watanabe K."/>
            <person name="Kumagai A."/>
            <person name="Itakura S."/>
            <person name="Fukuzumi Y."/>
            <person name="Fujimori Y."/>
            <person name="Komiyama M."/>
            <person name="Tashiro H."/>
            <person name="Tanigami A."/>
            <person name="Fujiwara T."/>
            <person name="Ono T."/>
            <person name="Yamada K."/>
            <person name="Fujii Y."/>
            <person name="Ozaki K."/>
            <person name="Hirao M."/>
            <person name="Ohmori Y."/>
            <person name="Kawabata A."/>
            <person name="Hikiji T."/>
            <person name="Kobatake N."/>
            <person name="Inagaki H."/>
            <person name="Ikema Y."/>
            <person name="Okamoto S."/>
            <person name="Okitani R."/>
            <person name="Kawakami T."/>
            <person name="Noguchi S."/>
            <person name="Itoh T."/>
            <person name="Shigeta K."/>
            <person name="Senba T."/>
            <person name="Matsumura K."/>
            <person name="Nakajima Y."/>
            <person name="Mizuno T."/>
            <person name="Morinaga M."/>
            <person name="Sasaki M."/>
            <person name="Togashi T."/>
            <person name="Oyama M."/>
            <person name="Hata H."/>
            <person name="Watanabe M."/>
            <person name="Komatsu T."/>
            <person name="Mizushima-Sugano J."/>
            <person name="Satoh T."/>
            <person name="Shirai Y."/>
            <person name="Takahashi Y."/>
            <person name="Nakagawa K."/>
            <person name="Okumura K."/>
            <person name="Nagase T."/>
            <person name="Nomura N."/>
            <person name="Kikuchi H."/>
            <person name="Masuho Y."/>
            <person name="Yamashita R."/>
            <person name="Nakai K."/>
            <person name="Yada T."/>
            <person name="Nakamura Y."/>
            <person name="Ohara O."/>
            <person name="Isogai T."/>
            <person name="Sugano S."/>
        </authorList>
    </citation>
    <scope>NUCLEOTIDE SEQUENCE [LARGE SCALE MRNA] (ISOFORM 1)</scope>
    <scope>VARIANT HIS-73</scope>
    <source>
        <tissue>Trachea</tissue>
    </source>
</reference>
<reference key="2">
    <citation type="journal article" date="2006" name="Nature">
        <title>DNA sequence and analysis of human chromosome 8.</title>
        <authorList>
            <person name="Nusbaum C."/>
            <person name="Mikkelsen T.S."/>
            <person name="Zody M.C."/>
            <person name="Asakawa S."/>
            <person name="Taudien S."/>
            <person name="Garber M."/>
            <person name="Kodira C.D."/>
            <person name="Schueler M.G."/>
            <person name="Shimizu A."/>
            <person name="Whittaker C.A."/>
            <person name="Chang J.L."/>
            <person name="Cuomo C.A."/>
            <person name="Dewar K."/>
            <person name="FitzGerald M.G."/>
            <person name="Yang X."/>
            <person name="Allen N.R."/>
            <person name="Anderson S."/>
            <person name="Asakawa T."/>
            <person name="Blechschmidt K."/>
            <person name="Bloom T."/>
            <person name="Borowsky M.L."/>
            <person name="Butler J."/>
            <person name="Cook A."/>
            <person name="Corum B."/>
            <person name="DeArellano K."/>
            <person name="DeCaprio D."/>
            <person name="Dooley K.T."/>
            <person name="Dorris L. III"/>
            <person name="Engels R."/>
            <person name="Gloeckner G."/>
            <person name="Hafez N."/>
            <person name="Hagopian D.S."/>
            <person name="Hall J.L."/>
            <person name="Ishikawa S.K."/>
            <person name="Jaffe D.B."/>
            <person name="Kamat A."/>
            <person name="Kudoh J."/>
            <person name="Lehmann R."/>
            <person name="Lokitsang T."/>
            <person name="Macdonald P."/>
            <person name="Major J.E."/>
            <person name="Matthews C.D."/>
            <person name="Mauceli E."/>
            <person name="Menzel U."/>
            <person name="Mihalev A.H."/>
            <person name="Minoshima S."/>
            <person name="Murayama Y."/>
            <person name="Naylor J.W."/>
            <person name="Nicol R."/>
            <person name="Nguyen C."/>
            <person name="O'Leary S.B."/>
            <person name="O'Neill K."/>
            <person name="Parker S.C.J."/>
            <person name="Polley A."/>
            <person name="Raymond C.K."/>
            <person name="Reichwald K."/>
            <person name="Rodriguez J."/>
            <person name="Sasaki T."/>
            <person name="Schilhabel M."/>
            <person name="Siddiqui R."/>
            <person name="Smith C.L."/>
            <person name="Sneddon T.P."/>
            <person name="Talamas J.A."/>
            <person name="Tenzin P."/>
            <person name="Topham K."/>
            <person name="Venkataraman V."/>
            <person name="Wen G."/>
            <person name="Yamazaki S."/>
            <person name="Young S.K."/>
            <person name="Zeng Q."/>
            <person name="Zimmer A.R."/>
            <person name="Rosenthal A."/>
            <person name="Birren B.W."/>
            <person name="Platzer M."/>
            <person name="Shimizu N."/>
            <person name="Lander E.S."/>
        </authorList>
    </citation>
    <scope>NUCLEOTIDE SEQUENCE [LARGE SCALE GENOMIC DNA]</scope>
</reference>
<reference key="3">
    <citation type="journal article" date="2004" name="Genome Res.">
        <title>The status, quality, and expansion of the NIH full-length cDNA project: the Mammalian Gene Collection (MGC).</title>
        <authorList>
            <consortium name="The MGC Project Team"/>
        </authorList>
    </citation>
    <scope>NUCLEOTIDE SEQUENCE [LARGE SCALE MRNA] (ISOFORM 2)</scope>
    <scope>VARIANT GLY-428</scope>
    <source>
        <tissue>Testis</tissue>
    </source>
</reference>
<reference key="4">
    <citation type="journal article" date="2017" name="Nat. Cell Biol.">
        <title>Retriever is a multiprotein complex for retromer-independent endosomal cargo recycling.</title>
        <authorList>
            <person name="McNally K.E."/>
            <person name="Faulkner R."/>
            <person name="Steinberg F."/>
            <person name="Gallon M."/>
            <person name="Ghai R."/>
            <person name="Pim D."/>
            <person name="Langton P."/>
            <person name="Pearson N."/>
            <person name="Danson C.M."/>
            <person name="Naegele H."/>
            <person name="Morris L.L."/>
            <person name="Singla A."/>
            <person name="Overlee B.L."/>
            <person name="Heesom K.J."/>
            <person name="Sessions R."/>
            <person name="Banks L."/>
            <person name="Collins B.M."/>
            <person name="Berger I."/>
            <person name="Billadeau D.D."/>
            <person name="Burstein E."/>
            <person name="Cullen P.J."/>
        </authorList>
    </citation>
    <scope>FUNCTION</scope>
    <scope>INTERACTION WITH CCDC22; CCDC93; VPS26C AND VPS35L</scope>
    <scope>MUTAGENESIS OF LEU-440</scope>
</reference>
<proteinExistence type="evidence at protein level"/>
<dbReference type="EMBL" id="AK093906">
    <property type="protein sequence ID" value="BAC04249.1"/>
    <property type="molecule type" value="mRNA"/>
</dbReference>
<dbReference type="EMBL" id="AP000424">
    <property type="status" value="NOT_ANNOTATED_CDS"/>
    <property type="molecule type" value="Genomic_DNA"/>
</dbReference>
<dbReference type="EMBL" id="AP001205">
    <property type="status" value="NOT_ANNOTATED_CDS"/>
    <property type="molecule type" value="Genomic_DNA"/>
</dbReference>
<dbReference type="EMBL" id="BC031260">
    <property type="protein sequence ID" value="AAH31260.1"/>
    <property type="molecule type" value="mRNA"/>
</dbReference>
<dbReference type="CCDS" id="CCDS6288.1">
    <molecule id="Q8N9S9-1"/>
</dbReference>
<dbReference type="CCDS" id="CCDS87622.1">
    <molecule id="Q8N9S9-2"/>
</dbReference>
<dbReference type="RefSeq" id="NP_001350649.1">
    <molecule id="Q8N9S9-2"/>
    <property type="nucleotide sequence ID" value="NM_001363720.1"/>
</dbReference>
<dbReference type="RefSeq" id="NP_689841.3">
    <molecule id="Q8N9S9-1"/>
    <property type="nucleotide sequence ID" value="NM_152628.3"/>
</dbReference>
<dbReference type="RefSeq" id="XP_005250872.1">
    <property type="nucleotide sequence ID" value="XM_005250815.3"/>
</dbReference>
<dbReference type="SMR" id="Q8N9S9"/>
<dbReference type="BioGRID" id="127977">
    <property type="interactions" value="8"/>
</dbReference>
<dbReference type="FunCoup" id="Q8N9S9">
    <property type="interactions" value="64"/>
</dbReference>
<dbReference type="IntAct" id="Q8N9S9">
    <property type="interactions" value="7"/>
</dbReference>
<dbReference type="STRING" id="9606.ENSP00000312368"/>
<dbReference type="TCDB" id="9.A.3.1.2">
    <property type="family name" value="the sorting nexin27 (snx27)-retromer assembly apparatus (retromeraa) family"/>
</dbReference>
<dbReference type="iPTMnet" id="Q8N9S9"/>
<dbReference type="PhosphoSitePlus" id="Q8N9S9"/>
<dbReference type="BioMuta" id="SNX31"/>
<dbReference type="DMDM" id="269849658"/>
<dbReference type="jPOST" id="Q8N9S9"/>
<dbReference type="MassIVE" id="Q8N9S9"/>
<dbReference type="PaxDb" id="9606-ENSP00000312368"/>
<dbReference type="PeptideAtlas" id="Q8N9S9"/>
<dbReference type="ProteomicsDB" id="72579">
    <molecule id="Q8N9S9-1"/>
</dbReference>
<dbReference type="ProteomicsDB" id="72580">
    <molecule id="Q8N9S9-2"/>
</dbReference>
<dbReference type="Antibodypedia" id="13167">
    <property type="antibodies" value="63 antibodies from 14 providers"/>
</dbReference>
<dbReference type="DNASU" id="169166"/>
<dbReference type="Ensembl" id="ENST00000311812.7">
    <molecule id="Q8N9S9-1"/>
    <property type="protein sequence ID" value="ENSP00000312368.2"/>
    <property type="gene ID" value="ENSG00000174226.9"/>
</dbReference>
<dbReference type="Ensembl" id="ENST00000428383.6">
    <molecule id="Q8N9S9-2"/>
    <property type="protein sequence ID" value="ENSP00000405024.2"/>
    <property type="gene ID" value="ENSG00000174226.9"/>
</dbReference>
<dbReference type="GeneID" id="169166"/>
<dbReference type="KEGG" id="hsa:169166"/>
<dbReference type="MANE-Select" id="ENST00000311812.7">
    <property type="protein sequence ID" value="ENSP00000312368.2"/>
    <property type="RefSeq nucleotide sequence ID" value="NM_152628.4"/>
    <property type="RefSeq protein sequence ID" value="NP_689841.3"/>
</dbReference>
<dbReference type="UCSC" id="uc003yjr.4">
    <molecule id="Q8N9S9-1"/>
    <property type="organism name" value="human"/>
</dbReference>
<dbReference type="AGR" id="HGNC:28605"/>
<dbReference type="CTD" id="169166"/>
<dbReference type="DisGeNET" id="169166"/>
<dbReference type="GeneCards" id="SNX31"/>
<dbReference type="HGNC" id="HGNC:28605">
    <property type="gene designation" value="SNX31"/>
</dbReference>
<dbReference type="HPA" id="ENSG00000174226">
    <property type="expression patterns" value="Tissue enhanced (esophagus, urinary bladder)"/>
</dbReference>
<dbReference type="MIM" id="619839">
    <property type="type" value="gene"/>
</dbReference>
<dbReference type="neXtProt" id="NX_Q8N9S9"/>
<dbReference type="OpenTargets" id="ENSG00000174226"/>
<dbReference type="PharmGKB" id="PA162404313"/>
<dbReference type="VEuPathDB" id="HostDB:ENSG00000174226"/>
<dbReference type="eggNOG" id="KOG3784">
    <property type="taxonomic scope" value="Eukaryota"/>
</dbReference>
<dbReference type="GeneTree" id="ENSGT00950000183212"/>
<dbReference type="HOGENOM" id="CLU_041342_0_0_1"/>
<dbReference type="InParanoid" id="Q8N9S9"/>
<dbReference type="OMA" id="ESRWQWF"/>
<dbReference type="OrthoDB" id="5772781at2759"/>
<dbReference type="PAN-GO" id="Q8N9S9">
    <property type="GO annotations" value="3 GO annotations based on evolutionary models"/>
</dbReference>
<dbReference type="PhylomeDB" id="Q8N9S9"/>
<dbReference type="TreeFam" id="TF318398"/>
<dbReference type="PathwayCommons" id="Q8N9S9"/>
<dbReference type="SignaLink" id="Q8N9S9"/>
<dbReference type="BioGRID-ORCS" id="169166">
    <property type="hits" value="14 hits in 1145 CRISPR screens"/>
</dbReference>
<dbReference type="ChiTaRS" id="SNX31">
    <property type="organism name" value="human"/>
</dbReference>
<dbReference type="GenomeRNAi" id="169166"/>
<dbReference type="Pharos" id="Q8N9S9">
    <property type="development level" value="Tdark"/>
</dbReference>
<dbReference type="PRO" id="PR:Q8N9S9"/>
<dbReference type="Proteomes" id="UP000005640">
    <property type="component" value="Chromosome 8"/>
</dbReference>
<dbReference type="RNAct" id="Q8N9S9">
    <property type="molecule type" value="protein"/>
</dbReference>
<dbReference type="Bgee" id="ENSG00000174226">
    <property type="expression patterns" value="Expressed in primordial germ cell in gonad and 117 other cell types or tissues"/>
</dbReference>
<dbReference type="ExpressionAtlas" id="Q8N9S9">
    <property type="expression patterns" value="baseline and differential"/>
</dbReference>
<dbReference type="GO" id="GO:0005769">
    <property type="term" value="C:early endosome"/>
    <property type="evidence" value="ECO:0000318"/>
    <property type="project" value="GO_Central"/>
</dbReference>
<dbReference type="GO" id="GO:0032991">
    <property type="term" value="C:protein-containing complex"/>
    <property type="evidence" value="ECO:0007669"/>
    <property type="project" value="Ensembl"/>
</dbReference>
<dbReference type="GO" id="GO:0035091">
    <property type="term" value="F:phosphatidylinositol binding"/>
    <property type="evidence" value="ECO:0000318"/>
    <property type="project" value="GO_Central"/>
</dbReference>
<dbReference type="GO" id="GO:0032456">
    <property type="term" value="P:endocytic recycling"/>
    <property type="evidence" value="ECO:0000318"/>
    <property type="project" value="GO_Central"/>
</dbReference>
<dbReference type="GO" id="GO:0006886">
    <property type="term" value="P:intracellular protein transport"/>
    <property type="evidence" value="ECO:0000318"/>
    <property type="project" value="GO_Central"/>
</dbReference>
<dbReference type="CDD" id="cd13336">
    <property type="entry name" value="FERM-like_C_SNX31"/>
    <property type="match status" value="1"/>
</dbReference>
<dbReference type="CDD" id="cd16122">
    <property type="entry name" value="FERM_F1_SNX31"/>
    <property type="match status" value="1"/>
</dbReference>
<dbReference type="CDD" id="cd06885">
    <property type="entry name" value="PX_SNX17_31"/>
    <property type="match status" value="1"/>
</dbReference>
<dbReference type="FunFam" id="2.30.29.30:FF:000297">
    <property type="entry name" value="Sorting nexin 31"/>
    <property type="match status" value="1"/>
</dbReference>
<dbReference type="FunFam" id="3.10.20.90:FF:000230">
    <property type="entry name" value="Sorting nexin 31"/>
    <property type="match status" value="1"/>
</dbReference>
<dbReference type="FunFam" id="1.20.80.60:FF:000001">
    <property type="entry name" value="Sorting nexin-17 isoform1"/>
    <property type="match status" value="1"/>
</dbReference>
<dbReference type="FunFam" id="3.30.1520.10:FF:000008">
    <property type="entry name" value="Sorting nexin-17 isoform1"/>
    <property type="match status" value="1"/>
</dbReference>
<dbReference type="Gene3D" id="1.20.80.60">
    <property type="match status" value="1"/>
</dbReference>
<dbReference type="Gene3D" id="3.10.20.90">
    <property type="entry name" value="Phosphatidylinositol 3-kinase Catalytic Subunit, Chain A, domain 1"/>
    <property type="match status" value="1"/>
</dbReference>
<dbReference type="Gene3D" id="3.30.1520.10">
    <property type="entry name" value="Phox-like domain"/>
    <property type="match status" value="1"/>
</dbReference>
<dbReference type="Gene3D" id="2.30.29.30">
    <property type="entry name" value="Pleckstrin-homology domain (PH domain)/Phosphotyrosine-binding domain (PTB)"/>
    <property type="match status" value="1"/>
</dbReference>
<dbReference type="InterPro" id="IPR011993">
    <property type="entry name" value="PH-like_dom_sf"/>
</dbReference>
<dbReference type="InterPro" id="IPR001683">
    <property type="entry name" value="PX_dom"/>
</dbReference>
<dbReference type="InterPro" id="IPR036871">
    <property type="entry name" value="PX_dom_sf"/>
</dbReference>
<dbReference type="InterPro" id="IPR048763">
    <property type="entry name" value="SNX17-31_FERM_F1"/>
</dbReference>
<dbReference type="InterPro" id="IPR048767">
    <property type="entry name" value="SNX17-31_FERM_F2"/>
</dbReference>
<dbReference type="InterPro" id="IPR040842">
    <property type="entry name" value="SNX17/31_FERM"/>
</dbReference>
<dbReference type="PANTHER" id="PTHR12431">
    <property type="entry name" value="SORTING NEXIN 17 AND 27"/>
    <property type="match status" value="1"/>
</dbReference>
<dbReference type="PANTHER" id="PTHR12431:SF15">
    <property type="entry name" value="SORTING NEXIN-31"/>
    <property type="match status" value="1"/>
</dbReference>
<dbReference type="Pfam" id="PF00787">
    <property type="entry name" value="PX"/>
    <property type="match status" value="1"/>
</dbReference>
<dbReference type="Pfam" id="PF21273">
    <property type="entry name" value="SNX17-27-31_F1_FERM"/>
    <property type="match status" value="1"/>
</dbReference>
<dbReference type="Pfam" id="PF21271">
    <property type="entry name" value="SNX17-31_F2_FERM"/>
    <property type="match status" value="1"/>
</dbReference>
<dbReference type="Pfam" id="PF18116">
    <property type="entry name" value="SNX17_FERM_C"/>
    <property type="match status" value="1"/>
</dbReference>
<dbReference type="SMART" id="SM00312">
    <property type="entry name" value="PX"/>
    <property type="match status" value="1"/>
</dbReference>
<dbReference type="SUPFAM" id="SSF64268">
    <property type="entry name" value="PX domain"/>
    <property type="match status" value="1"/>
</dbReference>
<dbReference type="PROSITE" id="PS50195">
    <property type="entry name" value="PX"/>
    <property type="match status" value="1"/>
</dbReference>
<comment type="function">
    <text evidence="7">May be involved in protein trafficking.</text>
</comment>
<comment type="subunit">
    <text evidence="4">Interacts with CCDC22, CCDC93, VPS26C and VPS35L, associates with the retriever and CCC complexes.</text>
</comment>
<comment type="interaction">
    <interactant intactId="EBI-9380649">
        <id>Q8N9S9</id>
    </interactant>
    <interactant intactId="EBI-741037">
        <id>Q9BRK4</id>
        <label>LZTS2</label>
    </interactant>
    <organismsDiffer>false</organismsDiffer>
    <experiments>3</experiments>
</comment>
<comment type="interaction">
    <interactant intactId="EBI-11745060">
        <id>Q8N9S9-2</id>
    </interactant>
    <interactant intactId="EBI-11102276">
        <id>Q9HD26-2</id>
        <label>GOPC</label>
    </interactant>
    <organismsDiffer>false</organismsDiffer>
    <experiments>3</experiments>
</comment>
<comment type="interaction">
    <interactant intactId="EBI-11745060">
        <id>Q8N9S9-2</id>
    </interactant>
    <interactant intactId="EBI-749731">
        <id>Q9UHY1</id>
        <label>NRBP1</label>
    </interactant>
    <organismsDiffer>false</organismsDiffer>
    <experiments>3</experiments>
</comment>
<comment type="alternative products">
    <event type="alternative splicing"/>
    <isoform>
        <id>Q8N9S9-1</id>
        <name>1</name>
        <sequence type="displayed"/>
    </isoform>
    <isoform>
        <id>Q8N9S9-2</id>
        <name>2</name>
        <sequence type="described" ref="VSP_033261 VSP_033262"/>
    </isoform>
</comment>
<comment type="similarity">
    <text evidence="6">Belongs to the sorting nexin family.</text>
</comment>
<feature type="chain" id="PRO_0000331603" description="Sorting nexin-31">
    <location>
        <begin position="1"/>
        <end position="440"/>
    </location>
</feature>
<feature type="domain" description="PX" evidence="1">
    <location>
        <begin position="1"/>
        <end position="109"/>
    </location>
</feature>
<feature type="splice variant" id="VSP_033261" description="In isoform 2." evidence="5">
    <location>
        <begin position="1"/>
        <end position="99"/>
    </location>
</feature>
<feature type="splice variant" id="VSP_033262" description="In isoform 2." evidence="5">
    <original>EFLKLAQL</original>
    <variation>MLGNTENW</variation>
    <location>
        <begin position="100"/>
        <end position="107"/>
    </location>
</feature>
<feature type="sequence variant" id="VAR_042900" description="In dbSNP:rs2187016." evidence="2">
    <original>D</original>
    <variation>H</variation>
    <location>
        <position position="73"/>
    </location>
</feature>
<feature type="sequence variant" id="VAR_042901" description="In dbSNP:rs2248609.">
    <original>Q</original>
    <variation>R</variation>
    <location>
        <position position="309"/>
    </location>
</feature>
<feature type="sequence variant" id="VAR_042902" description="In dbSNP:rs2022923." evidence="3">
    <original>D</original>
    <variation>G</variation>
    <location>
        <position position="428"/>
    </location>
</feature>
<feature type="mutagenesis site" description="Strongly decreases interaction with CCDC22, CCDC93, VPS26C and VPS35L." evidence="4">
    <original>L</original>
    <variation>G</variation>
    <location>
        <position position="440"/>
    </location>
</feature>
<feature type="sequence conflict" description="In Ref. 1; BAC04249." evidence="6" ref="1">
    <original>S</original>
    <variation>P</variation>
    <location>
        <position position="174"/>
    </location>
</feature>
<feature type="sequence conflict" description="In Ref. 1; BAC04249." evidence="6" ref="1">
    <original>T</original>
    <variation>A</variation>
    <location>
        <position position="338"/>
    </location>
</feature>
<organism>
    <name type="scientific">Homo sapiens</name>
    <name type="common">Human</name>
    <dbReference type="NCBI Taxonomy" id="9606"/>
    <lineage>
        <taxon>Eukaryota</taxon>
        <taxon>Metazoa</taxon>
        <taxon>Chordata</taxon>
        <taxon>Craniata</taxon>
        <taxon>Vertebrata</taxon>
        <taxon>Euteleostomi</taxon>
        <taxon>Mammalia</taxon>
        <taxon>Eutheria</taxon>
        <taxon>Euarchontoglires</taxon>
        <taxon>Primates</taxon>
        <taxon>Haplorrhini</taxon>
        <taxon>Catarrhini</taxon>
        <taxon>Hominidae</taxon>
        <taxon>Homo</taxon>
    </lineage>
</organism>
<sequence>MKMHFCIPVSQQRSDALGGRYVLYSVHLDGFLFCRVRYSQLHGWNEQLRRVFGNCLPPFPPKYYLAMTTAMADERRDQLEQYLQNVTMDPNVLRSDVFVEFLKLAQLNTFDIATKKAYLDIFLPNEQSIRIEIITSDTAERVLEVVSHKIGLCRELLGYFGLFLIRFGKEGKLSVVKKLADFELPYVSLGSSEVENCKVGLRKWYMAPSLDSVLMDCRVAVDLLYMQAIQDIEKGWAKPTQAQRQKLEAFQKEDSQTKFLELAREVRHYGYLQLDPCTCDYPESGSGAVLSVGNNEISCCITLPDSQTQDIVFQMSRVKCWQVTFLGTLLDTDGPQRTLNQNLELRFQYSEDSCWQWFVIYTKQAFLLSSCLKKMISEKMVKLAAENTEMQIEVPEQSKSKKYHIQQSQQKDYSSFLSRKSKIKIAKDDCVFGNIKEEDL</sequence>